<accession>O24629</accession>
<accession>F4I8A3</accession>
<accession>O22057</accession>
<accession>O22576</accession>
<accession>Q9FPH1</accession>
<accession>Q9T0P0</accession>
<protein>
    <recommendedName>
        <fullName>RNA polymerase sigma factor sigA</fullName>
        <shortName>Sigma factor A</shortName>
        <shortName>Sigma-A</shortName>
    </recommendedName>
    <alternativeName>
        <fullName>RNA polymerase sigma factor sig1</fullName>
        <shortName>Atsig1</shortName>
        <shortName>Sigma factor 1</shortName>
    </alternativeName>
    <alternativeName>
        <fullName>RNA polymerase sigma factor sig2</fullName>
        <shortName>Atsig2</shortName>
        <shortName>Sigma factor 2</shortName>
    </alternativeName>
    <alternativeName>
        <fullName>RNA polymerase sigma factor sigB</fullName>
        <shortName>Sigma factor B</shortName>
        <shortName>Sigma-B</shortName>
    </alternativeName>
</protein>
<reference key="1">
    <citation type="journal article" date="1997" name="FEBS Lett.">
        <title>Characterization of three cDNA species encoding plastid RNA polymerase sigma factors in Arabidopsis thaliana: evidence for the sigma factor heterogeneity in higher plant plastids.</title>
        <authorList>
            <person name="Tanaka K."/>
            <person name="Tozawa Y."/>
            <person name="Mochizuki N."/>
            <person name="Shinozaki K."/>
            <person name="Nagatani A."/>
            <person name="Wakasa K."/>
            <person name="Takahashi H."/>
        </authorList>
    </citation>
    <scope>NUCLEOTIDE SEQUENCE [GENOMIC DNA / MRNA] (ISOFORM 1)</scope>
    <scope>INDUCTION BY LIGHT</scope>
    <scope>GENE FAMILY</scope>
    <source>
        <strain>cv. Columbia</strain>
    </source>
</reference>
<reference key="2">
    <citation type="journal article" date="1997" name="Proc. Natl. Acad. Sci. U.S.A.">
        <title>Leaf-specifically expressed genes for polypeptides destined for chloroplasts with domains of sigma70 factors of bacterial RNA polymerases in Arabidopsis thaliana.</title>
        <authorList>
            <person name="Isono K."/>
            <person name="Shimizu M."/>
            <person name="Yoshimoto K."/>
            <person name="Niwa Y."/>
            <person name="Satoh K."/>
            <person name="Yokota A."/>
            <person name="Kobayashi H."/>
        </authorList>
    </citation>
    <scope>NUCLEOTIDE SEQUENCE [MRNA] (ISOFORM 1)</scope>
    <scope>SUBCELLULAR LOCATION</scope>
    <scope>TISSUE SPECIFICITY</scope>
    <scope>INDUCTION BY LIGHT</scope>
    <scope>GENE FAMILY</scope>
    <source>
        <strain>cv. Columbia</strain>
        <tissue>Leaf</tissue>
    </source>
</reference>
<reference key="3">
    <citation type="journal article" date="2000" name="Biochimie">
        <title>The role of sigma factors in plastid transcription.</title>
        <authorList>
            <person name="Allison L.A."/>
        </authorList>
    </citation>
    <scope>NUCLEOTIDE SEQUENCE [MRNA] (ISOFORM 1)</scope>
    <scope>TISSUE SPECIFICITY</scope>
    <scope>INDUCTION BY LIGHT</scope>
    <scope>GENE FAMILY</scope>
    <scope>NOMENCLATURE</scope>
    <source>
        <strain>cv. Columbia</strain>
        <tissue>Seedling hypocotyl</tissue>
    </source>
</reference>
<reference key="4">
    <citation type="submission" date="1997-07" db="EMBL/GenBank/DDBJ databases">
        <title>Candidate cDNAs encoding a plastidial sigma factor of the dicot Arabidopsis thaliana and the monocot Sorghum bicolor.</title>
        <authorList>
            <person name="Kroll D."/>
            <person name="Streubel M."/>
            <person name="Westhoff P."/>
        </authorList>
    </citation>
    <scope>NUCLEOTIDE SEQUENCE [MRNA] (ISOFORM 1)</scope>
    <source>
        <strain>cv. Columbia</strain>
        <tissue>Leaf</tissue>
    </source>
</reference>
<reference key="5">
    <citation type="submission" date="1997-09" db="EMBL/GenBank/DDBJ databases">
        <authorList>
            <person name="Zhou W."/>
            <person name="Shih M.-C."/>
        </authorList>
    </citation>
    <scope>NUCLEOTIDE SEQUENCE [MRNA] (ISOFORM 1)</scope>
    <source>
        <strain>cv. Columbia</strain>
    </source>
</reference>
<reference key="6">
    <citation type="journal article" date="2000" name="Nature">
        <title>Sequence and analysis of chromosome 1 of the plant Arabidopsis thaliana.</title>
        <authorList>
            <person name="Theologis A."/>
            <person name="Ecker J.R."/>
            <person name="Palm C.J."/>
            <person name="Federspiel N.A."/>
            <person name="Kaul S."/>
            <person name="White O."/>
            <person name="Alonso J."/>
            <person name="Altafi H."/>
            <person name="Araujo R."/>
            <person name="Bowman C.L."/>
            <person name="Brooks S.Y."/>
            <person name="Buehler E."/>
            <person name="Chan A."/>
            <person name="Chao Q."/>
            <person name="Chen H."/>
            <person name="Cheuk R.F."/>
            <person name="Chin C.W."/>
            <person name="Chung M.K."/>
            <person name="Conn L."/>
            <person name="Conway A.B."/>
            <person name="Conway A.R."/>
            <person name="Creasy T.H."/>
            <person name="Dewar K."/>
            <person name="Dunn P."/>
            <person name="Etgu P."/>
            <person name="Feldblyum T.V."/>
            <person name="Feng J.-D."/>
            <person name="Fong B."/>
            <person name="Fujii C.Y."/>
            <person name="Gill J.E."/>
            <person name="Goldsmith A.D."/>
            <person name="Haas B."/>
            <person name="Hansen N.F."/>
            <person name="Hughes B."/>
            <person name="Huizar L."/>
            <person name="Hunter J.L."/>
            <person name="Jenkins J."/>
            <person name="Johnson-Hopson C."/>
            <person name="Khan S."/>
            <person name="Khaykin E."/>
            <person name="Kim C.J."/>
            <person name="Koo H.L."/>
            <person name="Kremenetskaia I."/>
            <person name="Kurtz D.B."/>
            <person name="Kwan A."/>
            <person name="Lam B."/>
            <person name="Langin-Hooper S."/>
            <person name="Lee A."/>
            <person name="Lee J.M."/>
            <person name="Lenz C.A."/>
            <person name="Li J.H."/>
            <person name="Li Y.-P."/>
            <person name="Lin X."/>
            <person name="Liu S.X."/>
            <person name="Liu Z.A."/>
            <person name="Luros J.S."/>
            <person name="Maiti R."/>
            <person name="Marziali A."/>
            <person name="Militscher J."/>
            <person name="Miranda M."/>
            <person name="Nguyen M."/>
            <person name="Nierman W.C."/>
            <person name="Osborne B.I."/>
            <person name="Pai G."/>
            <person name="Peterson J."/>
            <person name="Pham P.K."/>
            <person name="Rizzo M."/>
            <person name="Rooney T."/>
            <person name="Rowley D."/>
            <person name="Sakano H."/>
            <person name="Salzberg S.L."/>
            <person name="Schwartz J.R."/>
            <person name="Shinn P."/>
            <person name="Southwick A.M."/>
            <person name="Sun H."/>
            <person name="Tallon L.J."/>
            <person name="Tambunga G."/>
            <person name="Toriumi M.J."/>
            <person name="Town C.D."/>
            <person name="Utterback T."/>
            <person name="Van Aken S."/>
            <person name="Vaysberg M."/>
            <person name="Vysotskaia V.S."/>
            <person name="Walker M."/>
            <person name="Wu D."/>
            <person name="Yu G."/>
            <person name="Fraser C.M."/>
            <person name="Venter J.C."/>
            <person name="Davis R.W."/>
        </authorList>
    </citation>
    <scope>NUCLEOTIDE SEQUENCE [LARGE SCALE GENOMIC DNA]</scope>
    <source>
        <strain>cv. Columbia</strain>
    </source>
</reference>
<reference key="7">
    <citation type="journal article" date="2017" name="Plant J.">
        <title>Araport11: a complete reannotation of the Arabidopsis thaliana reference genome.</title>
        <authorList>
            <person name="Cheng C.Y."/>
            <person name="Krishnakumar V."/>
            <person name="Chan A.P."/>
            <person name="Thibaud-Nissen F."/>
            <person name="Schobel S."/>
            <person name="Town C.D."/>
        </authorList>
    </citation>
    <scope>GENOME REANNOTATION</scope>
    <source>
        <strain>cv. Columbia</strain>
    </source>
</reference>
<reference key="8">
    <citation type="journal article" date="2003" name="Science">
        <title>Empirical analysis of transcriptional activity in the Arabidopsis genome.</title>
        <authorList>
            <person name="Yamada K."/>
            <person name="Lim J."/>
            <person name="Dale J.M."/>
            <person name="Chen H."/>
            <person name="Shinn P."/>
            <person name="Palm C.J."/>
            <person name="Southwick A.M."/>
            <person name="Wu H.C."/>
            <person name="Kim C.J."/>
            <person name="Nguyen M."/>
            <person name="Pham P.K."/>
            <person name="Cheuk R.F."/>
            <person name="Karlin-Newmann G."/>
            <person name="Liu S.X."/>
            <person name="Lam B."/>
            <person name="Sakano H."/>
            <person name="Wu T."/>
            <person name="Yu G."/>
            <person name="Miranda M."/>
            <person name="Quach H.L."/>
            <person name="Tripp M."/>
            <person name="Chang C.H."/>
            <person name="Lee J.M."/>
            <person name="Toriumi M.J."/>
            <person name="Chan M.M."/>
            <person name="Tang C.C."/>
            <person name="Onodera C.S."/>
            <person name="Deng J.M."/>
            <person name="Akiyama K."/>
            <person name="Ansari Y."/>
            <person name="Arakawa T."/>
            <person name="Banh J."/>
            <person name="Banno F."/>
            <person name="Bowser L."/>
            <person name="Brooks S.Y."/>
            <person name="Carninci P."/>
            <person name="Chao Q."/>
            <person name="Choy N."/>
            <person name="Enju A."/>
            <person name="Goldsmith A.D."/>
            <person name="Gurjal M."/>
            <person name="Hansen N.F."/>
            <person name="Hayashizaki Y."/>
            <person name="Johnson-Hopson C."/>
            <person name="Hsuan V.W."/>
            <person name="Iida K."/>
            <person name="Karnes M."/>
            <person name="Khan S."/>
            <person name="Koesema E."/>
            <person name="Ishida J."/>
            <person name="Jiang P.X."/>
            <person name="Jones T."/>
            <person name="Kawai J."/>
            <person name="Kamiya A."/>
            <person name="Meyers C."/>
            <person name="Nakajima M."/>
            <person name="Narusaka M."/>
            <person name="Seki M."/>
            <person name="Sakurai T."/>
            <person name="Satou M."/>
            <person name="Tamse R."/>
            <person name="Vaysberg M."/>
            <person name="Wallender E.K."/>
            <person name="Wong C."/>
            <person name="Yamamura Y."/>
            <person name="Yuan S."/>
            <person name="Shinozaki K."/>
            <person name="Davis R.W."/>
            <person name="Theologis A."/>
            <person name="Ecker J.R."/>
        </authorList>
    </citation>
    <scope>NUCLEOTIDE SEQUENCE [LARGE SCALE MRNA] (ISOFORM 1)</scope>
    <source>
        <strain>cv. Columbia</strain>
    </source>
</reference>
<reference key="9">
    <citation type="journal article" date="2009" name="DNA Res.">
        <title>Analysis of multiple occurrences of alternative splicing events in Arabidopsis thaliana using novel sequenced full-length cDNAs.</title>
        <authorList>
            <person name="Iida K."/>
            <person name="Fukami-Kobayashi K."/>
            <person name="Toyoda A."/>
            <person name="Sakaki Y."/>
            <person name="Kobayashi M."/>
            <person name="Seki M."/>
            <person name="Shinozaki K."/>
        </authorList>
    </citation>
    <scope>NUCLEOTIDE SEQUENCE [LARGE SCALE MRNA] (ISOFORM 1)</scope>
    <source>
        <strain>cv. Columbia</strain>
    </source>
</reference>
<reference key="10">
    <citation type="journal article" date="2000" name="J. Biol. Chem.">
        <title>Evolutionary conservation of C-terminal domains of primary sigma(70)-type transcription factors between plants and bacteria.</title>
        <authorList>
            <person name="Hakimi M.-A."/>
            <person name="Privat I."/>
            <person name="Valay J.-G."/>
            <person name="Lerbs-Mache S."/>
        </authorList>
    </citation>
    <scope>NUCLEOTIDE SEQUENCE [MRNA] OF 3-502 (ISOFORM 1)</scope>
    <scope>FUNCTION</scope>
</reference>
<reference key="11">
    <citation type="journal article" date="1999" name="Plant Cell Physiol.">
        <title>Plastidic RNA polymerase sigma factors in Arabidopsis.</title>
        <authorList>
            <person name="Kanamaru K."/>
            <person name="Fujiwara M."/>
            <person name="Seki M."/>
            <person name="Katagiri T."/>
            <person name="Nakamura M."/>
            <person name="Mochizuki N."/>
            <person name="Nagatani A."/>
            <person name="Shinozaki K."/>
            <person name="Tanaka K."/>
            <person name="Takahashi H."/>
        </authorList>
    </citation>
    <scope>SUBCELLULAR LOCATION</scope>
    <scope>TISSUE SPECIFICITY</scope>
    <scope>INDUCTION BY LIGHT</scope>
    <source>
        <strain>cv. Columbia</strain>
    </source>
</reference>
<reference key="12">
    <citation type="journal article" date="2002" name="FEBS Lett.">
        <title>Blue light specific and differential expression of a plastid sigma factor, Sig5 in Arabidopsis thaliana.</title>
        <authorList>
            <person name="Tsunoyama Y."/>
            <person name="Morikawa K."/>
            <person name="Shiina T."/>
            <person name="Toyoshima Y."/>
        </authorList>
    </citation>
    <scope>INDUCTION BY LIGHT</scope>
    <source>
        <strain>cv. Columbia</strain>
    </source>
</reference>
<reference key="13">
    <citation type="journal article" date="2002" name="FEBS Lett.">
        <title>Novel nuclear-encoded proteins interacting with a plastid sigma factor, Sig1, in Arabidopsis thaliana.</title>
        <authorList>
            <person name="Morikawa K."/>
            <person name="Shiina T."/>
            <person name="Murakami S."/>
            <person name="Toyoshima Y."/>
        </authorList>
    </citation>
    <scope>INTERACTION WITH SIB1</scope>
    <source>
        <strain>cv. Columbia</strain>
    </source>
</reference>
<reference key="14">
    <citation type="journal article" date="2003" name="Plant Mol. Biol.">
        <title>Characterization of Arabidopsis plastid sigma-like transcription factors SIG1, SIG2 and SIG3.</title>
        <authorList>
            <person name="Privat I."/>
            <person name="Hakimi M.-A."/>
            <person name="Buhot L."/>
            <person name="Favory J.-J."/>
            <person name="Mache-Lerbs S."/>
        </authorList>
    </citation>
    <scope>FUNCTION</scope>
    <scope>INDUCTION BY IMBIBITION AND LIGHT</scope>
    <source>
        <strain>cv. Columbia</strain>
    </source>
</reference>
<reference key="15">
    <citation type="journal article" date="2005" name="Plant J.">
        <title>A nuclear-encoded sigma factor, Arabidopsis SIG6, recognizes sigma-70 type chloroplast promoters and regulates early chloroplast development in cotyledons.</title>
        <authorList>
            <person name="Ishizaki Y."/>
            <person name="Tsunoyama Y."/>
            <person name="Hatano K."/>
            <person name="Ando K."/>
            <person name="Kato K."/>
            <person name="Shinmyo A."/>
            <person name="Kobori M."/>
            <person name="Takeba G."/>
            <person name="Nakahira Y."/>
            <person name="Shiina T."/>
        </authorList>
    </citation>
    <scope>TISSUE SPECIFICITY</scope>
    <source>
        <strain>cv. Columbia</strain>
    </source>
</reference>
<reference key="16">
    <citation type="journal article" date="2008" name="Plant J.">
        <title>Light induction of Arabidopsis SIG1 and SIG5 transcripts in mature leaves: differential roles of cryptochrome 1 and cryptochrome 2 and dual function of SIG5 in the recognition of plastid promoters.</title>
        <authorList>
            <person name="Onda Y."/>
            <person name="Yagi Y."/>
            <person name="Saito Y."/>
            <person name="Takenaka N."/>
            <person name="Toyoshima Y."/>
        </authorList>
    </citation>
    <scope>INDUCTION BY LIGHT</scope>
</reference>
<reference key="17">
    <citation type="journal article" date="2010" name="Plant Cell Environ.">
        <title>The Arabidopsis gene SIGMA FACTOR-BINDING PROTEIN 1 plays a role in the salicylate- and jasmonate-mediated defence responses.</title>
        <authorList>
            <person name="Xie Y.-D."/>
            <person name="Li W."/>
            <person name="Guo D."/>
            <person name="Dong J."/>
            <person name="Zhang Q."/>
            <person name="Fu Y."/>
            <person name="Ren D."/>
            <person name="Peng M."/>
            <person name="Xia Y."/>
        </authorList>
    </citation>
    <scope>DISRUPTION PHENOTYPE</scope>
    <scope>INDUCTION BY PSEUDOMONAS SYRINGAE</scope>
    <source>
        <strain>cv. Columbia</strain>
    </source>
</reference>
<reference key="18">
    <citation type="journal article" date="2010" name="Proc. Natl. Acad. Sci. U.S.A.">
        <title>Sigma factor phosphorylation in the photosynthetic control of photosystem stoichiometry.</title>
        <authorList>
            <person name="Shimizu M."/>
            <person name="Kato H."/>
            <person name="Ogawa T."/>
            <person name="Kurachi A."/>
            <person name="Nakagawa Y."/>
            <person name="Kobayashi H."/>
        </authorList>
    </citation>
    <scope>PHOSPHORYLATION AT THR-170</scope>
    <scope>MUTAGENESIS OF THR-170</scope>
</reference>
<reference key="19">
    <citation type="journal article" date="2013" name="Philos. Trans. R. Soc. Lond., B, Biol. Sci.">
        <title>Evolutionary rewiring: a modified prokaryotic gene-regulatory pathway in chloroplasts.</title>
        <authorList>
            <person name="Puthiyaveetil S."/>
            <person name="Ibrahim I.M."/>
            <person name="Allen J.F."/>
        </authorList>
    </citation>
    <scope>INTERACTION WITH CSK</scope>
    <scope>PHOSPHORYLATION BY CSK</scope>
</reference>
<evidence type="ECO:0000250" key="1"/>
<evidence type="ECO:0000255" key="2"/>
<evidence type="ECO:0000256" key="3">
    <source>
        <dbReference type="SAM" id="MobiDB-lite"/>
    </source>
</evidence>
<evidence type="ECO:0000269" key="4">
    <source>
    </source>
</evidence>
<evidence type="ECO:0000269" key="5">
    <source>
    </source>
</evidence>
<evidence type="ECO:0000269" key="6">
    <source>
    </source>
</evidence>
<evidence type="ECO:0000269" key="7">
    <source>
    </source>
</evidence>
<evidence type="ECO:0000269" key="8">
    <source>
    </source>
</evidence>
<evidence type="ECO:0000269" key="9">
    <source>
    </source>
</evidence>
<evidence type="ECO:0000269" key="10">
    <source>
    </source>
</evidence>
<evidence type="ECO:0000269" key="11">
    <source>
    </source>
</evidence>
<evidence type="ECO:0000269" key="12">
    <source>
    </source>
</evidence>
<evidence type="ECO:0000269" key="13">
    <source>
    </source>
</evidence>
<evidence type="ECO:0000269" key="14">
    <source>
    </source>
</evidence>
<evidence type="ECO:0000269" key="15">
    <source>
    </source>
</evidence>
<evidence type="ECO:0000269" key="16">
    <source>
    </source>
</evidence>
<evidence type="ECO:0000305" key="17"/>
<proteinExistence type="evidence at protein level"/>
<gene>
    <name type="primary">SIGA</name>
    <name type="synonym">RPOD1</name>
    <name type="synonym">SIG1</name>
    <name type="synonym">SIG2</name>
    <name type="synonym">SIGB</name>
    <name type="ordered locus">At1g64860</name>
    <name type="ORF">F13O11.16</name>
</gene>
<dbReference type="EMBL" id="D89993">
    <property type="protein sequence ID" value="BAA22421.1"/>
    <property type="molecule type" value="mRNA"/>
</dbReference>
<dbReference type="EMBL" id="AB019942">
    <property type="protein sequence ID" value="BAA82448.1"/>
    <property type="molecule type" value="Genomic_DNA"/>
</dbReference>
<dbReference type="EMBL" id="AB004821">
    <property type="protein sequence ID" value="BAA22214.1"/>
    <property type="molecule type" value="mRNA"/>
</dbReference>
<dbReference type="EMBL" id="AF015542">
    <property type="protein sequence ID" value="AAB69384.1"/>
    <property type="molecule type" value="mRNA"/>
</dbReference>
<dbReference type="EMBL" id="Y14252">
    <property type="protein sequence ID" value="CAA74640.1"/>
    <property type="molecule type" value="mRNA"/>
</dbReference>
<dbReference type="EMBL" id="AF024590">
    <property type="protein sequence ID" value="AAB81958.1"/>
    <property type="molecule type" value="mRNA"/>
</dbReference>
<dbReference type="EMBL" id="AC006193">
    <property type="protein sequence ID" value="AAD38260.1"/>
    <property type="molecule type" value="Genomic_DNA"/>
</dbReference>
<dbReference type="EMBL" id="CP002684">
    <property type="protein sequence ID" value="AEE34298.1"/>
    <property type="molecule type" value="Genomic_DNA"/>
</dbReference>
<dbReference type="EMBL" id="CP002684">
    <property type="protein sequence ID" value="AEE34299.1"/>
    <property type="molecule type" value="Genomic_DNA"/>
</dbReference>
<dbReference type="EMBL" id="AF325036">
    <property type="protein sequence ID" value="AAG40388.1"/>
    <property type="molecule type" value="mRNA"/>
</dbReference>
<dbReference type="EMBL" id="AY062526">
    <property type="protein sequence ID" value="AAL32604.1"/>
    <property type="molecule type" value="mRNA"/>
</dbReference>
<dbReference type="EMBL" id="AY093306">
    <property type="protein sequence ID" value="AAM13305.1"/>
    <property type="molecule type" value="mRNA"/>
</dbReference>
<dbReference type="EMBL" id="AK316773">
    <property type="protein sequence ID" value="BAH19492.1"/>
    <property type="molecule type" value="mRNA"/>
</dbReference>
<dbReference type="EMBL" id="Y14567">
    <property type="protein sequence ID" value="CAA74896.1"/>
    <property type="molecule type" value="mRNA"/>
</dbReference>
<dbReference type="PIR" id="H96671">
    <property type="entry name" value="H96671"/>
</dbReference>
<dbReference type="PIR" id="T52642">
    <property type="entry name" value="T52642"/>
</dbReference>
<dbReference type="RefSeq" id="NP_001319322.1">
    <molecule id="O24629-2"/>
    <property type="nucleotide sequence ID" value="NM_001334181.1"/>
</dbReference>
<dbReference type="RefSeq" id="NP_176666.1">
    <molecule id="O24629-1"/>
    <property type="nucleotide sequence ID" value="NM_105160.3"/>
</dbReference>
<dbReference type="SMR" id="O24629"/>
<dbReference type="BioGRID" id="28015">
    <property type="interactions" value="2"/>
</dbReference>
<dbReference type="FunCoup" id="O24629">
    <property type="interactions" value="740"/>
</dbReference>
<dbReference type="IntAct" id="O24629">
    <property type="interactions" value="2"/>
</dbReference>
<dbReference type="MINT" id="O24629"/>
<dbReference type="STRING" id="3702.O24629"/>
<dbReference type="iPTMnet" id="O24629"/>
<dbReference type="PaxDb" id="3702-AT1G64860.1"/>
<dbReference type="ProteomicsDB" id="234547">
    <molecule id="O24629-1"/>
</dbReference>
<dbReference type="EnsemblPlants" id="AT1G64860.1">
    <molecule id="O24629-1"/>
    <property type="protein sequence ID" value="AT1G64860.1"/>
    <property type="gene ID" value="AT1G64860"/>
</dbReference>
<dbReference type="EnsemblPlants" id="AT1G64860.2">
    <molecule id="O24629-2"/>
    <property type="protein sequence ID" value="AT1G64860.2"/>
    <property type="gene ID" value="AT1G64860"/>
</dbReference>
<dbReference type="GeneID" id="842794"/>
<dbReference type="Gramene" id="AT1G64860.1">
    <molecule id="O24629-1"/>
    <property type="protein sequence ID" value="AT1G64860.1"/>
    <property type="gene ID" value="AT1G64860"/>
</dbReference>
<dbReference type="Gramene" id="AT1G64860.2">
    <molecule id="O24629-2"/>
    <property type="protein sequence ID" value="AT1G64860.2"/>
    <property type="gene ID" value="AT1G64860"/>
</dbReference>
<dbReference type="KEGG" id="ath:AT1G64860"/>
<dbReference type="Araport" id="AT1G64860"/>
<dbReference type="TAIR" id="AT1G64860">
    <property type="gene designation" value="SIGA"/>
</dbReference>
<dbReference type="eggNOG" id="ENOG502QQ9I">
    <property type="taxonomic scope" value="Eukaryota"/>
</dbReference>
<dbReference type="HOGENOM" id="CLU_014793_3_4_1"/>
<dbReference type="InParanoid" id="O24629"/>
<dbReference type="OMA" id="HCHFSST"/>
<dbReference type="PhylomeDB" id="O24629"/>
<dbReference type="PRO" id="PR:O24629"/>
<dbReference type="Proteomes" id="UP000006548">
    <property type="component" value="Chromosome 1"/>
</dbReference>
<dbReference type="ExpressionAtlas" id="O24629">
    <property type="expression patterns" value="baseline and differential"/>
</dbReference>
<dbReference type="GO" id="GO:0009507">
    <property type="term" value="C:chloroplast"/>
    <property type="evidence" value="ECO:0000314"/>
    <property type="project" value="UniProtKB"/>
</dbReference>
<dbReference type="GO" id="GO:0003677">
    <property type="term" value="F:DNA binding"/>
    <property type="evidence" value="ECO:0007669"/>
    <property type="project" value="UniProtKB-KW"/>
</dbReference>
<dbReference type="GO" id="GO:0016987">
    <property type="term" value="F:sigma factor activity"/>
    <property type="evidence" value="ECO:0000315"/>
    <property type="project" value="UniProtKB"/>
</dbReference>
<dbReference type="GO" id="GO:0071482">
    <property type="term" value="P:cellular response to light stimulus"/>
    <property type="evidence" value="ECO:0000270"/>
    <property type="project" value="UniProtKB"/>
</dbReference>
<dbReference type="GO" id="GO:0071461">
    <property type="term" value="P:cellular response to redox state"/>
    <property type="evidence" value="ECO:0000314"/>
    <property type="project" value="UniProtKB"/>
</dbReference>
<dbReference type="GO" id="GO:0006352">
    <property type="term" value="P:DNA-templated transcription initiation"/>
    <property type="evidence" value="ECO:0000314"/>
    <property type="project" value="UniProtKB"/>
</dbReference>
<dbReference type="GO" id="GO:0080005">
    <property type="term" value="P:photosystem stoichiometry adjustment"/>
    <property type="evidence" value="ECO:0000314"/>
    <property type="project" value="UniProtKB"/>
</dbReference>
<dbReference type="GO" id="GO:0006355">
    <property type="term" value="P:regulation of DNA-templated transcription"/>
    <property type="evidence" value="ECO:0000314"/>
    <property type="project" value="UniProtKB"/>
</dbReference>
<dbReference type="GO" id="GO:2001141">
    <property type="term" value="P:regulation of RNA biosynthetic process"/>
    <property type="evidence" value="ECO:0000315"/>
    <property type="project" value="UniProtKB"/>
</dbReference>
<dbReference type="CDD" id="cd06171">
    <property type="entry name" value="Sigma70_r4"/>
    <property type="match status" value="1"/>
</dbReference>
<dbReference type="FunFam" id="1.10.10.10:FF:000520">
    <property type="entry name" value="RNA polymerase sigma factor sigA-like"/>
    <property type="match status" value="1"/>
</dbReference>
<dbReference type="Gene3D" id="1.10.601.10">
    <property type="entry name" value="RNA Polymerase Primary Sigma Factor"/>
    <property type="match status" value="1"/>
</dbReference>
<dbReference type="Gene3D" id="1.10.10.10">
    <property type="entry name" value="Winged helix-like DNA-binding domain superfamily/Winged helix DNA-binding domain"/>
    <property type="match status" value="2"/>
</dbReference>
<dbReference type="InterPro" id="IPR014284">
    <property type="entry name" value="RNA_pol_sigma-70_dom"/>
</dbReference>
<dbReference type="InterPro" id="IPR000943">
    <property type="entry name" value="RNA_pol_sigma70"/>
</dbReference>
<dbReference type="InterPro" id="IPR007627">
    <property type="entry name" value="RNA_pol_sigma70_r2"/>
</dbReference>
<dbReference type="InterPro" id="IPR007624">
    <property type="entry name" value="RNA_pol_sigma70_r3"/>
</dbReference>
<dbReference type="InterPro" id="IPR007630">
    <property type="entry name" value="RNA_pol_sigma70_r4"/>
</dbReference>
<dbReference type="InterPro" id="IPR013325">
    <property type="entry name" value="RNA_pol_sigma_r2"/>
</dbReference>
<dbReference type="InterPro" id="IPR013324">
    <property type="entry name" value="RNA_pol_sigma_r3/r4-like"/>
</dbReference>
<dbReference type="InterPro" id="IPR050239">
    <property type="entry name" value="Sigma-70_RNA_pol_init_factors"/>
</dbReference>
<dbReference type="InterPro" id="IPR036388">
    <property type="entry name" value="WH-like_DNA-bd_sf"/>
</dbReference>
<dbReference type="NCBIfam" id="TIGR02937">
    <property type="entry name" value="sigma70-ECF"/>
    <property type="match status" value="1"/>
</dbReference>
<dbReference type="PANTHER" id="PTHR30603">
    <property type="entry name" value="RNA POLYMERASE SIGMA FACTOR RPO"/>
    <property type="match status" value="1"/>
</dbReference>
<dbReference type="PANTHER" id="PTHR30603:SF14">
    <property type="entry name" value="RNA POLYMERASE SIGMA FACTOR SIGA"/>
    <property type="match status" value="1"/>
</dbReference>
<dbReference type="Pfam" id="PF04542">
    <property type="entry name" value="Sigma70_r2"/>
    <property type="match status" value="1"/>
</dbReference>
<dbReference type="Pfam" id="PF04539">
    <property type="entry name" value="Sigma70_r3"/>
    <property type="match status" value="1"/>
</dbReference>
<dbReference type="Pfam" id="PF04545">
    <property type="entry name" value="Sigma70_r4"/>
    <property type="match status" value="1"/>
</dbReference>
<dbReference type="PRINTS" id="PR00046">
    <property type="entry name" value="SIGMA70FCT"/>
</dbReference>
<dbReference type="SUPFAM" id="SSF88946">
    <property type="entry name" value="Sigma2 domain of RNA polymerase sigma factors"/>
    <property type="match status" value="1"/>
</dbReference>
<dbReference type="SUPFAM" id="SSF88659">
    <property type="entry name" value="Sigma3 and sigma4 domains of RNA polymerase sigma factors"/>
    <property type="match status" value="2"/>
</dbReference>
<dbReference type="PROSITE" id="PS00715">
    <property type="entry name" value="SIGMA70_1"/>
    <property type="match status" value="1"/>
</dbReference>
<name>SIGA_ARATH</name>
<organism>
    <name type="scientific">Arabidopsis thaliana</name>
    <name type="common">Mouse-ear cress</name>
    <dbReference type="NCBI Taxonomy" id="3702"/>
    <lineage>
        <taxon>Eukaryota</taxon>
        <taxon>Viridiplantae</taxon>
        <taxon>Streptophyta</taxon>
        <taxon>Embryophyta</taxon>
        <taxon>Tracheophyta</taxon>
        <taxon>Spermatophyta</taxon>
        <taxon>Magnoliopsida</taxon>
        <taxon>eudicotyledons</taxon>
        <taxon>Gunneridae</taxon>
        <taxon>Pentapetalae</taxon>
        <taxon>rosids</taxon>
        <taxon>malvids</taxon>
        <taxon>Brassicales</taxon>
        <taxon>Brassicaceae</taxon>
        <taxon>Camelineae</taxon>
        <taxon>Arabidopsis</taxon>
    </lineage>
</organism>
<keyword id="KW-0025">Alternative splicing</keyword>
<keyword id="KW-0150">Chloroplast</keyword>
<keyword id="KW-0238">DNA-binding</keyword>
<keyword id="KW-0597">Phosphoprotein</keyword>
<keyword id="KW-0934">Plastid</keyword>
<keyword id="KW-1185">Reference proteome</keyword>
<keyword id="KW-0731">Sigma factor</keyword>
<keyword id="KW-0804">Transcription</keyword>
<keyword id="KW-0805">Transcription regulation</keyword>
<keyword id="KW-0809">Transit peptide</keyword>
<comment type="function">
    <text evidence="5 9">Essential protein. Sigma factors are initiation factors that promote the attachment of plastid-encoded RNA polymerase (PEP) to specific initiation sites and are then released. Controls the transcription of the psaA gene and thus modulates photosystem stoichiometry. Thereby maintains a harmonious electron flow and photosynthetic efficiency.</text>
</comment>
<comment type="subunit">
    <text evidence="7 14">Interacts with SIB1 in chloroplast (PubMed:11943170). Binds to CSK (PubMed:23754813).</text>
</comment>
<comment type="interaction">
    <interactant intactId="EBI-2118157">
        <id>O24629</id>
    </interactant>
    <interactant intactId="EBI-2118209">
        <id>Q9LDH1</id>
        <label>SIB1</label>
    </interactant>
    <organismsDiffer>false</organismsDiffer>
    <experiments>3</experiments>
</comment>
<comment type="subcellular location">
    <subcellularLocation>
        <location evidence="4 16">Plastid</location>
        <location evidence="4 16">Chloroplast</location>
    </subcellularLocation>
</comment>
<comment type="alternative products">
    <event type="alternative splicing"/>
    <isoform>
        <id>O24629-1</id>
        <name>1</name>
        <sequence type="displayed"/>
    </isoform>
    <isoform>
        <id>O24629-2</id>
        <name>2</name>
        <sequence type="described" ref="VSP_043969"/>
    </isoform>
</comment>
<comment type="tissue specificity">
    <text evidence="4 6 10 16">Highly expressed in leaves, and to a lesser extent in roots. Expressed in old seedlings (8 days), cotyledons, hypocotyls, leaves, sepals and siliques.</text>
</comment>
<comment type="induction">
    <text evidence="4 6 8 9 11 12 15 16">Induced by light, especially after dark adaptation. Induced by both red light (660 nm) and blue light (470 nm) in dark-adapted plants in a cryptochrome-dependent manner (i.e. requiring CRY1 and CRY2). Induced after three days of imbibition. Promoter specificity is modified by phosphorylation of Thr-170. Suppressed in response to infection with the necrotrophic bacterial pathogen Pseudomonas syringae.</text>
</comment>
<comment type="PTM">
    <text evidence="13 14">The phosphorylation of Thr-170 mediated by oxidative conditions of plastoquinone (PQ) changes the promoter specificity, selectively inhibiting the transcription of the psaA gene, which encodes a PS-I protein. Phosphorylation of the holoenzyme occurs in the dark. This phosphorylation in response to plastoquinone redox state modification is mediated by CSK.</text>
</comment>
<comment type="disruption phenotype">
    <text evidence="12">Lethal.</text>
</comment>
<comment type="similarity">
    <text evidence="17">Belongs to the sigma-70 factor family.</text>
</comment>
<feature type="transit peptide" description="Chloroplast" evidence="2">
    <location>
        <begin position="1"/>
        <end position="23"/>
    </location>
</feature>
<feature type="chain" id="PRO_0000418093" description="RNA polymerase sigma factor sigA">
    <location>
        <begin position="24"/>
        <end position="502"/>
    </location>
</feature>
<feature type="DNA-binding region" description="H-T-H motif" evidence="1">
    <location>
        <begin position="461"/>
        <end position="480"/>
    </location>
</feature>
<feature type="region of interest" description="Disordered" evidence="3">
    <location>
        <begin position="57"/>
        <end position="92"/>
    </location>
</feature>
<feature type="short sequence motif" description="Polymerase core binding">
    <location>
        <begin position="287"/>
        <end position="300"/>
    </location>
</feature>
<feature type="compositionally biased region" description="Polar residues" evidence="3">
    <location>
        <begin position="57"/>
        <end position="71"/>
    </location>
</feature>
<feature type="modified residue" description="Phosphothreonine" evidence="13">
    <location>
        <position position="170"/>
    </location>
</feature>
<feature type="splice variant" id="VSP_043969" description="In isoform 2." evidence="17">
    <original>GLSRERVRQVGLVALEKLKHAARKRKMEAMILKN</original>
    <variation>IEREGETGRACGTGETKTRSEEEKNGGNDP</variation>
    <location>
        <begin position="469"/>
        <end position="502"/>
    </location>
</feature>
<feature type="mutagenesis site" description="Increased transcription induction of psaA gene." evidence="13">
    <original>T</original>
    <variation>V</variation>
    <location>
        <position position="170"/>
    </location>
</feature>
<feature type="sequence conflict" description="In Ref. 5; AAB81958." evidence="17" ref="5">
    <original>S</original>
    <variation>R</variation>
    <location>
        <position position="58"/>
    </location>
</feature>
<feature type="sequence conflict" description="In Ref. 2; BAA22214." evidence="17" ref="2">
    <original>Q</original>
    <variation>P</variation>
    <location>
        <position position="161"/>
    </location>
</feature>
<feature type="sequence conflict" description="In Ref. 5; AAB81958." evidence="17" ref="5">
    <original>V</original>
    <variation>A</variation>
    <location>
        <position position="203"/>
    </location>
</feature>
<feature type="sequence conflict" description="In Ref. 8; AAG40388." evidence="17" ref="8">
    <original>D</original>
    <variation>N</variation>
    <location>
        <position position="279"/>
    </location>
</feature>
<sequence>MATAAVIGLNTGKRLLSSSFYHSDVTEKFLSVNDHCSSQYHIASTKSGITAKKASNYSPSFPSSNRHTQSAKALKESVDVASTEKPWLPNGTDKELEEECYDDDDLISHSVEAILLLQKSMLEKSWNLSFEKAVSSEYPGKGTIRKKKIPVITCSGISARQRRIGAKKKTNMTHVKAVSDVSSGKQVRGYVKGVISEDVLSHVEVVRLSKKIKSGLRLDDHKSRLKDRLGCEPSDEQLAVSLKISRAELQAWLMECHLAREKLAMSNVRLVMSIAQRYDNLGAEMSDLVQGGLIGLLRGIEKFDSSKGFRISTYVYWWIRQGVSRALVDNSRTLRLPTHLHERLGLIRNAKLRLQEKGITPSIDRIAESLNMSQKKVRNATEAVSKVFSLDRDAFPSLNGLPGETHHSYIADTRLENNPWHGYDDLALKEEVSKLISATLGEREKEIIRLYYGLDKECLTWEDISKRIGLSRERVRQVGLVALEKLKHAARKRKMEAMILKN</sequence>